<protein>
    <recommendedName>
        <fullName evidence="1">Uracil-DNA glycosylase</fullName>
        <shortName evidence="1">UDG</shortName>
        <ecNumber evidence="1">3.2.2.27</ecNumber>
    </recommendedName>
</protein>
<reference key="1">
    <citation type="submission" date="2004-12" db="EMBL/GenBank/DDBJ databases">
        <title>The genome sequence of Borrelia hermsii and Borrelia turicatae: comparative analysis of two agents of endemic N. America relapsing fever.</title>
        <authorList>
            <person name="Porcella S.F."/>
            <person name="Raffel S.J."/>
            <person name="Schrumpf M.E."/>
            <person name="Montgomery B."/>
            <person name="Smith T."/>
            <person name="Schwan T.G."/>
        </authorList>
    </citation>
    <scope>NUCLEOTIDE SEQUENCE [LARGE SCALE GENOMIC DNA]</scope>
    <source>
        <strain>91E135</strain>
    </source>
</reference>
<organism>
    <name type="scientific">Borrelia turicatae (strain 91E135)</name>
    <dbReference type="NCBI Taxonomy" id="314724"/>
    <lineage>
        <taxon>Bacteria</taxon>
        <taxon>Pseudomonadati</taxon>
        <taxon>Spirochaetota</taxon>
        <taxon>Spirochaetia</taxon>
        <taxon>Spirochaetales</taxon>
        <taxon>Borreliaceae</taxon>
        <taxon>Borrelia</taxon>
    </lineage>
</organism>
<dbReference type="EC" id="3.2.2.27" evidence="1"/>
<dbReference type="EMBL" id="CP000049">
    <property type="protein sequence ID" value="AAX17395.1"/>
    <property type="molecule type" value="Genomic_DNA"/>
</dbReference>
<dbReference type="RefSeq" id="WP_011772014.1">
    <property type="nucleotide sequence ID" value="NC_008710.1"/>
</dbReference>
<dbReference type="SMR" id="A1QYK3"/>
<dbReference type="KEGG" id="btu:BT0053"/>
<dbReference type="eggNOG" id="COG0692">
    <property type="taxonomic scope" value="Bacteria"/>
</dbReference>
<dbReference type="HOGENOM" id="CLU_032162_3_0_12"/>
<dbReference type="Proteomes" id="UP000001205">
    <property type="component" value="Chromosome"/>
</dbReference>
<dbReference type="GO" id="GO:0005737">
    <property type="term" value="C:cytoplasm"/>
    <property type="evidence" value="ECO:0007669"/>
    <property type="project" value="UniProtKB-SubCell"/>
</dbReference>
<dbReference type="GO" id="GO:0004844">
    <property type="term" value="F:uracil DNA N-glycosylase activity"/>
    <property type="evidence" value="ECO:0007669"/>
    <property type="project" value="UniProtKB-UniRule"/>
</dbReference>
<dbReference type="GO" id="GO:0097510">
    <property type="term" value="P:base-excision repair, AP site formation via deaminated base removal"/>
    <property type="evidence" value="ECO:0007669"/>
    <property type="project" value="TreeGrafter"/>
</dbReference>
<dbReference type="CDD" id="cd10027">
    <property type="entry name" value="UDG-F1-like"/>
    <property type="match status" value="1"/>
</dbReference>
<dbReference type="FunFam" id="3.40.470.10:FF:000001">
    <property type="entry name" value="Uracil-DNA glycosylase"/>
    <property type="match status" value="1"/>
</dbReference>
<dbReference type="Gene3D" id="3.40.470.10">
    <property type="entry name" value="Uracil-DNA glycosylase-like domain"/>
    <property type="match status" value="1"/>
</dbReference>
<dbReference type="HAMAP" id="MF_00148">
    <property type="entry name" value="UDG"/>
    <property type="match status" value="1"/>
</dbReference>
<dbReference type="InterPro" id="IPR002043">
    <property type="entry name" value="UDG_fam1"/>
</dbReference>
<dbReference type="InterPro" id="IPR018085">
    <property type="entry name" value="Ura-DNA_Glyclase_AS"/>
</dbReference>
<dbReference type="InterPro" id="IPR005122">
    <property type="entry name" value="Uracil-DNA_glycosylase-like"/>
</dbReference>
<dbReference type="InterPro" id="IPR036895">
    <property type="entry name" value="Uracil-DNA_glycosylase-like_sf"/>
</dbReference>
<dbReference type="NCBIfam" id="NF003588">
    <property type="entry name" value="PRK05254.1-1"/>
    <property type="match status" value="1"/>
</dbReference>
<dbReference type="NCBIfam" id="NF003589">
    <property type="entry name" value="PRK05254.1-2"/>
    <property type="match status" value="1"/>
</dbReference>
<dbReference type="NCBIfam" id="NF003591">
    <property type="entry name" value="PRK05254.1-4"/>
    <property type="match status" value="1"/>
</dbReference>
<dbReference type="NCBIfam" id="NF003592">
    <property type="entry name" value="PRK05254.1-5"/>
    <property type="match status" value="1"/>
</dbReference>
<dbReference type="NCBIfam" id="TIGR00628">
    <property type="entry name" value="ung"/>
    <property type="match status" value="1"/>
</dbReference>
<dbReference type="PANTHER" id="PTHR11264">
    <property type="entry name" value="URACIL-DNA GLYCOSYLASE"/>
    <property type="match status" value="1"/>
</dbReference>
<dbReference type="PANTHER" id="PTHR11264:SF0">
    <property type="entry name" value="URACIL-DNA GLYCOSYLASE"/>
    <property type="match status" value="1"/>
</dbReference>
<dbReference type="Pfam" id="PF03167">
    <property type="entry name" value="UDG"/>
    <property type="match status" value="1"/>
</dbReference>
<dbReference type="SMART" id="SM00986">
    <property type="entry name" value="UDG"/>
    <property type="match status" value="1"/>
</dbReference>
<dbReference type="SMART" id="SM00987">
    <property type="entry name" value="UreE_C"/>
    <property type="match status" value="1"/>
</dbReference>
<dbReference type="SUPFAM" id="SSF52141">
    <property type="entry name" value="Uracil-DNA glycosylase-like"/>
    <property type="match status" value="1"/>
</dbReference>
<dbReference type="PROSITE" id="PS00130">
    <property type="entry name" value="U_DNA_GLYCOSYLASE"/>
    <property type="match status" value="1"/>
</dbReference>
<name>UNG_BORT9</name>
<gene>
    <name evidence="1" type="primary">ung</name>
    <name type="ordered locus">BT0053</name>
</gene>
<proteinExistence type="inferred from homology"/>
<evidence type="ECO:0000255" key="1">
    <source>
        <dbReference type="HAMAP-Rule" id="MF_00148"/>
    </source>
</evidence>
<keyword id="KW-0963">Cytoplasm</keyword>
<keyword id="KW-0227">DNA damage</keyword>
<keyword id="KW-0234">DNA repair</keyword>
<keyword id="KW-0378">Hydrolase</keyword>
<keyword id="KW-1185">Reference proteome</keyword>
<comment type="function">
    <text evidence="1">Excises uracil residues from the DNA which can arise as a result of misincorporation of dUMP residues by DNA polymerase or due to deamination of cytosine.</text>
</comment>
<comment type="catalytic activity">
    <reaction evidence="1">
        <text>Hydrolyzes single-stranded DNA or mismatched double-stranded DNA and polynucleotides, releasing free uracil.</text>
        <dbReference type="EC" id="3.2.2.27"/>
    </reaction>
</comment>
<comment type="subcellular location">
    <subcellularLocation>
        <location evidence="1">Cytoplasm</location>
    </subcellularLocation>
</comment>
<comment type="similarity">
    <text evidence="1">Belongs to the uracil-DNA glycosylase (UDG) superfamily. UNG family.</text>
</comment>
<accession>A1QYK3</accession>
<sequence>MEVKIEESWKEMLKGEFCKSYFKRLVNFIKNEYKTKKDKIFPSPKLIFNAFDSLPFKDIKIVILGQDPYHGKGQANGLAFSVNSDIKIPPSLQNIFKEIERSLKIKTIPNGDLTRWATQGVFLLNSILTVEEGRPSSHKDIGWEIFTNEVIKIISKNLNNVVFMLWGNFARGKKELIDASKHLILETSHPSPYSAHNGFLGSNHFSQTLKYLKEHNKISIDFQ</sequence>
<feature type="chain" id="PRO_1000199771" description="Uracil-DNA glycosylase">
    <location>
        <begin position="1"/>
        <end position="223"/>
    </location>
</feature>
<feature type="active site" description="Proton acceptor" evidence="1">
    <location>
        <position position="67"/>
    </location>
</feature>